<protein>
    <recommendedName>
        <fullName evidence="15">Acetyltransferase TRI7</fullName>
        <ecNumber evidence="3">2.3.1.-</ecNumber>
    </recommendedName>
    <alternativeName>
        <fullName evidence="15">Core trichothecene cluster (CTC) protein 7</fullName>
    </alternativeName>
</protein>
<comment type="function">
    <text evidence="2 3 4 5 6 8 9 10 11 12 13 14">Acetyltransferase; part of the core gene cluster that mediates the biosynthesis of trichothecenes, a very large family of chemically related bicyclic sesquiterpene compounds acting as mycotoxins, including T2-toxin (PubMed:11352533). The biosynthesis of trichothecenes begins with the cyclization of farnesyl diphosphate to trichodiene and is catalyzed by the trichodiene synthase TRI5 (PubMed:3800398). Trichodiene undergoes a series of oxygenations catalyzed by the cytochrome P450 monooxygenase TRI4 (PubMed:7651333). TRI4 controls the addition of four oxygens at C-2, C-3, C-11, and the C-12, C-13-epoxide to form the intermediate isotrichotriol (PubMed:16917519). Isotrichotriol then undergoes a non-enzymatic isomerization and cyclization to form isotrichodermol (PubMed:2317042). During this process, the oxygen at the C-2 position becomes the pyran ring oxygen and the hydroxyl group at C-11 is lost (PubMed:2317042). More complex type A trichothecenes are built by modifying isotrichodermol through a series of paired hydroxylation and acetylation or acylation steps (PubMed:11352533). Isotrichodermol is converted to isotrichodermin by the acetyltransferase TRI101 (PubMed:10583973). TRI101 encodes a C-3 transacetylase that acts as a self-protection or resistance factor during biosynthesis and that the presence of a free C-3 hydroxyl group is a key component of Fusarium trichothecene phytotoxicity (PubMed:10583973). A second hydroxyl group is added to C-15 by the trichothecene C-15 hydroxylase TRI11, producing 15-decalonectrin, which is then acetylated by TRI3, producing calonectrin (PubMed:8593041, PubMed:9435078). A third hydroxyl group is added at C-4 by the cytochrome P450 monooxygenase TRI13, converting calonectrin to 3,15-diacetoxyspirpenol, which is subsequently acetylated by the acetyltransferase TRI7 (PubMed:11352533, PubMed:12135578). A fourth hydroxyl group is added to C-8 by the cytochrome P450 monooxygenase TRI1, followed by the addition of an isovaleryl moiety by TRI16 (PubMed:12620849, PubMed:14532047). Finally, the acetyl group is removed from the C-3 position by the trichothecene C-3 esterase TRI8 to produce T-2 toxin (PubMed:12039755).</text>
</comment>
<comment type="pathway">
    <text evidence="3">Sesquiterpene biosynthesis; trichothecene biosynthesis.</text>
</comment>
<comment type="subcellular location">
    <subcellularLocation>
        <location evidence="1">Membrane</location>
        <topology evidence="1">Multi-pass membrane protein</topology>
    </subcellularLocation>
</comment>
<comment type="induction">
    <text evidence="7">Expression is positively regulated by the trichothecene cluster-specific transcription activator TRI10 (PubMed:12732543).</text>
</comment>
<comment type="disruption phenotype">
    <text evidence="3">Does not produce T-2 toxin, but accumulated HT-2 toxin by an alternate pathway that presumably included C-8 oxidation of 3,15-diacetoxyscirpenol to produce 3,15-diacetyl-T-2 tetraol, C-8 esterification to 3-acetyl HT-2 toxin, and C-3 deacetylation to HT-2 toxin (PubMed:11352533).</text>
</comment>
<comment type="miscellaneous">
    <text evidence="17">Trichothecenes are sesquiterpenoid toxins that act by inhibiting protein biosynthesis.</text>
</comment>
<comment type="similarity">
    <text evidence="17">Belongs to the wax synthase family.</text>
</comment>
<keyword id="KW-0012">Acyltransferase</keyword>
<keyword id="KW-0472">Membrane</keyword>
<keyword id="KW-0808">Transferase</keyword>
<keyword id="KW-0812">Transmembrane</keyword>
<keyword id="KW-1133">Transmembrane helix</keyword>
<feature type="chain" id="PRO_0000442368" description="Acetyltransferase TRI7">
    <location>
        <begin position="1"/>
        <end position="441"/>
    </location>
</feature>
<feature type="transmembrane region" description="Helical" evidence="1">
    <location>
        <begin position="14"/>
        <end position="34"/>
    </location>
</feature>
<feature type="transmembrane region" description="Helical" evidence="1">
    <location>
        <begin position="75"/>
        <end position="95"/>
    </location>
</feature>
<feature type="transmembrane region" description="Helical" evidence="1">
    <location>
        <begin position="158"/>
        <end position="178"/>
    </location>
</feature>
<feature type="transmembrane region" description="Helical" evidence="1">
    <location>
        <begin position="306"/>
        <end position="326"/>
    </location>
</feature>
<feature type="transmembrane region" description="Helical" evidence="1">
    <location>
        <begin position="336"/>
        <end position="356"/>
    </location>
</feature>
<feature type="transmembrane region" description="Helical" evidence="1">
    <location>
        <begin position="377"/>
        <end position="397"/>
    </location>
</feature>
<feature type="transmembrane region" description="Helical" evidence="1">
    <location>
        <begin position="421"/>
        <end position="441"/>
    </location>
</feature>
<name>TRI7_FUSSP</name>
<evidence type="ECO:0000255" key="1"/>
<evidence type="ECO:0000269" key="2">
    <source>
    </source>
</evidence>
<evidence type="ECO:0000269" key="3">
    <source>
    </source>
</evidence>
<evidence type="ECO:0000269" key="4">
    <source>
    </source>
</evidence>
<evidence type="ECO:0000269" key="5">
    <source>
    </source>
</evidence>
<evidence type="ECO:0000269" key="6">
    <source>
    </source>
</evidence>
<evidence type="ECO:0000269" key="7">
    <source>
    </source>
</evidence>
<evidence type="ECO:0000269" key="8">
    <source>
    </source>
</evidence>
<evidence type="ECO:0000269" key="9">
    <source>
    </source>
</evidence>
<evidence type="ECO:0000269" key="10">
    <source>
    </source>
</evidence>
<evidence type="ECO:0000269" key="11">
    <source>
    </source>
</evidence>
<evidence type="ECO:0000269" key="12">
    <source>
    </source>
</evidence>
<evidence type="ECO:0000269" key="13">
    <source>
    </source>
</evidence>
<evidence type="ECO:0000269" key="14">
    <source>
    </source>
</evidence>
<evidence type="ECO:0000303" key="15">
    <source>
    </source>
</evidence>
<evidence type="ECO:0000303" key="16">
    <source>
    </source>
</evidence>
<evidence type="ECO:0000305" key="17"/>
<accession>Q9C1B8</accession>
<sequence length="441" mass="49760">MDIASKVEGFPTLGILYYTSTLLAVCTYAALIIISIPKTGPASLVRYSSPAIVLTVGKQLFHASYGVSGSLAHRSLTLALTALFILQCCNFLVLTRLDAKDLAKKNIFQDSDHMIYKAYRVVCLIFNVRGIGTPWQAKHLCGFPRFYQRGKGRGPTPIWFILRQSLIVAWQCLLLDIIYTTSMSTPKEDTLKLFGEGTEYMYLDANAEQWTGRFIAGIIAWVIPGRVSIDLPHRVLSIISVFLGFSSPQQWPPLFGSMLDAYTIRGFWSTFWHSYCRWTLTTISSFICRDFLRLPRPSIVERYLNIAFVFLGSAVVHMAIDSFCWGPPMKTKLPTLAFFGSLVVGIIIEDTIQALCRRITGEKRRDGDDGVPVWHKLVGYIWVSFWFMMTSPWYLYHNSRLPPDDTWLVPVSFVDTFGLDTATMLLFGSGVILKFAIGIEV</sequence>
<gene>
    <name evidence="16" type="primary">TRI7</name>
</gene>
<dbReference type="EC" id="2.3.1.-" evidence="3"/>
<dbReference type="EMBL" id="AF359360">
    <property type="protein sequence ID" value="AAK33076.1"/>
    <property type="molecule type" value="Genomic_DNA"/>
</dbReference>
<dbReference type="BioCyc" id="MetaCyc:MONOMER-19563"/>
<dbReference type="UniPathway" id="UPA00267"/>
<dbReference type="GO" id="GO:0016020">
    <property type="term" value="C:membrane"/>
    <property type="evidence" value="ECO:0007669"/>
    <property type="project" value="UniProtKB-SubCell"/>
</dbReference>
<dbReference type="GO" id="GO:0008374">
    <property type="term" value="F:O-acyltransferase activity"/>
    <property type="evidence" value="ECO:0007669"/>
    <property type="project" value="InterPro"/>
</dbReference>
<dbReference type="GO" id="GO:0006629">
    <property type="term" value="P:lipid metabolic process"/>
    <property type="evidence" value="ECO:0007669"/>
    <property type="project" value="InterPro"/>
</dbReference>
<dbReference type="InterPro" id="IPR044851">
    <property type="entry name" value="Wax_synthase"/>
</dbReference>
<dbReference type="InterPro" id="IPR032805">
    <property type="entry name" value="Wax_synthase_dom"/>
</dbReference>
<dbReference type="PANTHER" id="PTHR31595">
    <property type="entry name" value="LONG-CHAIN-ALCOHOL O-FATTY-ACYLTRANSFERASE 3-RELATED"/>
    <property type="match status" value="1"/>
</dbReference>
<dbReference type="PANTHER" id="PTHR31595:SF27">
    <property type="entry name" value="WAX SYNTHASE DOMAIN-CONTAINING PROTEIN-RELATED"/>
    <property type="match status" value="1"/>
</dbReference>
<dbReference type="Pfam" id="PF13813">
    <property type="entry name" value="MBOAT_2"/>
    <property type="match status" value="1"/>
</dbReference>
<organism>
    <name type="scientific">Fusarium sporotrichioides</name>
    <dbReference type="NCBI Taxonomy" id="5514"/>
    <lineage>
        <taxon>Eukaryota</taxon>
        <taxon>Fungi</taxon>
        <taxon>Dikarya</taxon>
        <taxon>Ascomycota</taxon>
        <taxon>Pezizomycotina</taxon>
        <taxon>Sordariomycetes</taxon>
        <taxon>Hypocreomycetidae</taxon>
        <taxon>Hypocreales</taxon>
        <taxon>Nectriaceae</taxon>
        <taxon>Fusarium</taxon>
    </lineage>
</organism>
<proteinExistence type="evidence at protein level"/>
<reference key="1">
    <citation type="journal article" date="2001" name="Fungal Genet. Biol.">
        <title>A genetic and biochemical approach to study trichothecene diversity in Fusarium sporotrichioides and Fusarium graminearum.</title>
        <authorList>
            <person name="Brown D.W."/>
            <person name="McCormick S.P."/>
            <person name="Alexander N.J."/>
            <person name="Proctor R.H."/>
            <person name="Desjardins A.E."/>
        </authorList>
    </citation>
    <scope>NUCLEOTIDE SEQUENCE [GENOMIC DNA]</scope>
    <scope>FUNCTION</scope>
    <scope>CATALYTIC ACTIVITY</scope>
    <scope>DISRUPTION PHENOTYPE</scope>
    <scope>PATHWAY</scope>
    <source>
        <strain>ATCC 24631 / NRRL 3299</strain>
    </source>
</reference>
<reference key="2">
    <citation type="journal article" date="1986" name="Arch. Biochem. Biophys.">
        <title>Purification and characterization of the sesquiterpene cyclase trichodiene synthetase from Fusarium sporotrichioides.</title>
        <authorList>
            <person name="Hohn T.M."/>
            <person name="Vanmiddlesworth F."/>
        </authorList>
    </citation>
    <scope>FUNCTION</scope>
</reference>
<reference key="3">
    <citation type="journal article" date="1990" name="Appl. Environ. Microbiol.">
        <title>Bioconversion of possible T-2 toxin precursors by a mutant strain of Fusarium sporotrichioides NRRL 3299.</title>
        <authorList>
            <person name="McCormick S.P."/>
            <person name="Taylor S.L."/>
            <person name="Plattner R.D."/>
            <person name="Beremand M.N."/>
        </authorList>
    </citation>
    <scope>FUNCTION</scope>
</reference>
<reference key="4">
    <citation type="journal article" date="1995" name="Mol. Gen. Genet.">
        <title>The Tri4 gene of Fusarium sporotrichioides encodes a cytochrome P450 monooxygenase involved in trichothecene biosynthesis.</title>
        <authorList>
            <person name="Hohn T.M."/>
            <person name="Desjardins A.E."/>
            <person name="McCormick S.P."/>
        </authorList>
    </citation>
    <scope>FUNCTION</scope>
</reference>
<reference key="5">
    <citation type="journal article" date="1996" name="Appl. Environ. Microbiol.">
        <title>Isolation and characterization of Tri3, a gene encoding 15-O-acetyltransferase from Fusarium sporotrichioides.</title>
        <authorList>
            <person name="McCormick S.P."/>
            <person name="Hohn T.M."/>
            <person name="Desjardins A.E."/>
        </authorList>
    </citation>
    <scope>FUNCTION</scope>
</reference>
<reference key="6">
    <citation type="journal article" date="1998" name="Appl. Environ. Microbiol.">
        <title>The TRI11 gene of Fusarium sporotrichioides encodes a cytochrome P-450 monooxygenase required for C-15 hydroxylation in trichothecene biosynthesis.</title>
        <authorList>
            <person name="Alexander N.J."/>
            <person name="Hohn T.M."/>
            <person name="McCormick S.P."/>
        </authorList>
    </citation>
    <scope>FUNCTION</scope>
</reference>
<reference key="7">
    <citation type="journal article" date="1999" name="Appl. Environ. Microbiol.">
        <title>Disruption of TRI101, the gene encoding trichothecene 3-O-acetyltransferase, from Fusarium sporotrichioides.</title>
        <authorList>
            <person name="McCormick S.P."/>
            <person name="Alexander N.J."/>
            <person name="Trapp S.E."/>
            <person name="Hohn T.M."/>
        </authorList>
    </citation>
    <scope>FUNCTION</scope>
</reference>
<reference key="8">
    <citation type="journal article" date="2002" name="Appl. Environ. Microbiol.">
        <title>Fusarium Tri8 encodes a trichothecene C-3 esterase.</title>
        <authorList>
            <person name="McCormick S.P."/>
            <person name="Alexander N.J."/>
        </authorList>
    </citation>
    <scope>FUNCTION</scope>
</reference>
<reference key="9">
    <citation type="journal article" date="2002" name="Fungal Genet. Biol.">
        <title>Inactivation of a cytochrome P-450 is a determinant of trichothecene diversity in Fusarium species.</title>
        <authorList>
            <person name="Brown D.W."/>
            <person name="McCormick S.P."/>
            <person name="Alexander N.J."/>
            <person name="Proctor R.H."/>
            <person name="Desjardins A.E."/>
        </authorList>
    </citation>
    <scope>FUNCTION</scope>
</reference>
<reference key="10">
    <citation type="journal article" date="2003" name="Appl. Environ. Microbiol.">
        <title>Tri1 encodes the cytochrome P450 monooxygenase for C-8 hydroxylation during trichothecene biosynthesis in Fusarium sporotrichioides and resides upstream of another new Tri gene.</title>
        <authorList>
            <person name="Meek I.B."/>
            <person name="Peplow A.W."/>
            <person name="Ake C. Jr."/>
            <person name="Phillips T.D."/>
            <person name="Beremand M.N."/>
        </authorList>
    </citation>
    <scope>FUNCTION</scope>
</reference>
<reference key="11">
    <citation type="journal article" date="2003" name="Appl. Environ. Microbiol.">
        <title>Identification of new genes positively regulated by Tri10 and a regulatory network for trichothecene mycotoxin production.</title>
        <authorList>
            <person name="Peplow A.W."/>
            <person name="Tag A.G."/>
            <person name="Garifullina G.F."/>
            <person name="Beremand M.N."/>
        </authorList>
    </citation>
    <scope>INDUCTION</scope>
</reference>
<reference key="12">
    <citation type="journal article" date="2003" name="Appl. Environ. Microbiol.">
        <title>Tri16 is required for esterification of position C-8 during trichothecene mycotoxin production by Fusarium sporotrichioides.</title>
        <authorList>
            <person name="Peplow A.W."/>
            <person name="Meek I.B."/>
            <person name="Wiles M.C."/>
            <person name="Phillips T.D."/>
            <person name="Beremand M.N."/>
        </authorList>
    </citation>
    <scope>FUNCTION</scope>
</reference>
<reference key="13">
    <citation type="journal article" date="2006" name="Can. J. Microbiol.">
        <title>Fusarium Tri4 encodes a multifunctional oxygenase required for trichothecene biosynthesis.</title>
        <authorList>
            <person name="McCormick S.P."/>
            <person name="Alexander N.J."/>
            <person name="Proctor R.H."/>
        </authorList>
    </citation>
    <scope>FUNCTION</scope>
</reference>